<gene>
    <name type="primary">Tcf3</name>
    <name evidence="9" type="synonym">Pan</name>
    <name type="synonym">Ptf1c</name>
    <name type="synonym">Tcfe2a</name>
</gene>
<organism>
    <name type="scientific">Rattus norvegicus</name>
    <name type="common">Rat</name>
    <dbReference type="NCBI Taxonomy" id="10116"/>
    <lineage>
        <taxon>Eukaryota</taxon>
        <taxon>Metazoa</taxon>
        <taxon>Chordata</taxon>
        <taxon>Craniata</taxon>
        <taxon>Vertebrata</taxon>
        <taxon>Euteleostomi</taxon>
        <taxon>Mammalia</taxon>
        <taxon>Eutheria</taxon>
        <taxon>Euarchontoglires</taxon>
        <taxon>Glires</taxon>
        <taxon>Rodentia</taxon>
        <taxon>Myomorpha</taxon>
        <taxon>Muroidea</taxon>
        <taxon>Muridae</taxon>
        <taxon>Murinae</taxon>
        <taxon>Rattus</taxon>
    </lineage>
</organism>
<comment type="function">
    <text evidence="2 3 7">Transcriptional regulator involved in the initiation of neuronal differentiation and mesenchymal to epithelial transition (By similarity). Heterodimers between TCF3 and tissue-specific basic helix-loop-helix (bHLH) proteins play major roles in determining tissue-specific cell fate during embryogenesis, like muscle or early B-cell differentiation (By similarity). Together with TCF15, required for the mesenchymal to epithelial transition (By similarity). Dimers bind DNA on E-box motifs: 5'-CANNTG-3' (By similarity). Binds to the kappa-E2 site in the kappa immunoglobulin gene enhancer (By similarity). Binds to the consensus sequence CAC/GCTGT/C present, in the chymotrypsin, insulin, AP-4, and several other gene enhancer motifs (PubMed:2200736).</text>
</comment>
<comment type="function">
    <molecule>Isoform E47</molecule>
    <text evidence="3">Facilitates ATOH7 binding to DNA at the consensus sequence 5'-CAGGTG-3', and positively regulates transcriptional activity.</text>
</comment>
<comment type="subunit">
    <text evidence="2 3 8">Homodimer. Heterodimer; efficient DNA binding requires dimerization with another bHLH protein. Forms a heterodimer with TWIST1 and TWIST2. Forms a heterodimer with NEUROD1; the heterodimer is inhibited in presence of ID2, but not NR0B2, to E-box element. Forms a heterodimer with TCF15; the heterodimer binds E-box element. Forms a heterodimer with MYOG; heterodimerization enhances MYOG DNA-binding and transcriptional activities. Forms a heterodimer with ATOH8; repress transcription of TCF3 and TCF3-NEUROG3 dimer-induced transactivation of E box-dependent promoters. Component of a nuclear TAL-1 complex composed at least of CBFA2T3, LDB1, TAL1 and TCF3. Interacts with NEUROD2 (By similarity). Interacts with EP300 (By similarity). Interacts with PTF1A, TGFB1I1 (By similarity). Interacts with UBE2I (PubMed:9013644). Interacts with BHLHA9 (By similarity). Interacts with ASB2; the interaction is mediated by SKP2 and targets TCF3 for Notch-induced proteasomal degradation (By similarity). Interacts with transcription factor ASCL5/AmeloD (By similarity).</text>
</comment>
<comment type="subunit">
    <molecule>Isoform E12</molecule>
    <text evidence="2 3">Interacts with RALGAPA1 (By similarity). Interacts with FIGLA (By similarity).</text>
</comment>
<comment type="subunit">
    <molecule>Isoform E47</molecule>
    <text evidence="3">Forms a heterodimer with ATOH7; required for ATOH7 DNA-binding.</text>
</comment>
<comment type="subcellular location">
    <subcellularLocation>
        <location evidence="2">Nucleus</location>
    </subcellularLocation>
</comment>
<comment type="alternative products">
    <event type="alternative splicing"/>
    <isoform>
        <id>P21677-1</id>
        <name>E12</name>
        <name>PAN-2</name>
        <sequence type="displayed"/>
    </isoform>
    <isoform>
        <id>P21677-2</id>
        <name>E47</name>
        <name>PAN-1</name>
        <sequence type="described" ref="VSP_002157"/>
    </isoform>
</comment>
<comment type="PTM">
    <text>Phosphorylated following NGF stimulation.</text>
</comment>
<comment type="PTM">
    <text evidence="3">Undergoes Notch-induced ubiquitination and subsequent proteasomal degradation which is mediated by ASB1 or ASB2, the substrate-recognition components of probable ECS E3 ubiquitin-protein ligase complexes.</text>
</comment>
<dbReference type="EMBL" id="X54549">
    <property type="protein sequence ID" value="CAA38421.1"/>
    <property type="molecule type" value="mRNA"/>
</dbReference>
<dbReference type="EMBL" id="X62323">
    <property type="protein sequence ID" value="CAA44199.1"/>
    <property type="molecule type" value="mRNA"/>
</dbReference>
<dbReference type="EMBL" id="AJ973227">
    <property type="protein sequence ID" value="CAJ00426.1"/>
    <property type="molecule type" value="mRNA"/>
</dbReference>
<dbReference type="EMBL" id="S77532">
    <property type="protein sequence ID" value="AAB21103.1"/>
    <property type="molecule type" value="mRNA"/>
</dbReference>
<dbReference type="PIR" id="A35816">
    <property type="entry name" value="A35816"/>
</dbReference>
<dbReference type="PIR" id="B35816">
    <property type="entry name" value="B35816"/>
</dbReference>
<dbReference type="PIR" id="I78853">
    <property type="entry name" value="I78853"/>
</dbReference>
<dbReference type="RefSeq" id="NP_001030314.1">
    <property type="nucleotide sequence ID" value="NM_001035237.1"/>
</dbReference>
<dbReference type="RefSeq" id="NP_598208.2">
    <property type="nucleotide sequence ID" value="NM_133524.2"/>
</dbReference>
<dbReference type="SMR" id="P21677"/>
<dbReference type="BioGRID" id="251063">
    <property type="interactions" value="4"/>
</dbReference>
<dbReference type="CORUM" id="P21677"/>
<dbReference type="FunCoup" id="P21677">
    <property type="interactions" value="1696"/>
</dbReference>
<dbReference type="STRING" id="10116.ENSRNOP00000071280"/>
<dbReference type="iPTMnet" id="P21677"/>
<dbReference type="PhosphoSitePlus" id="P21677"/>
<dbReference type="PaxDb" id="10116-ENSRNOP00000023473"/>
<dbReference type="GeneID" id="171046"/>
<dbReference type="KEGG" id="rno:171046"/>
<dbReference type="UCSC" id="RGD:620914">
    <molecule id="P21677-1"/>
    <property type="organism name" value="rat"/>
</dbReference>
<dbReference type="AGR" id="RGD:620914"/>
<dbReference type="CTD" id="6929"/>
<dbReference type="RGD" id="620914">
    <property type="gene designation" value="Tcf3"/>
</dbReference>
<dbReference type="eggNOG" id="KOG3910">
    <property type="taxonomic scope" value="Eukaryota"/>
</dbReference>
<dbReference type="InParanoid" id="P21677"/>
<dbReference type="OrthoDB" id="80973at9989"/>
<dbReference type="PhylomeDB" id="P21677"/>
<dbReference type="Reactome" id="R-RNO-525793">
    <property type="pathway name" value="Myogenesis"/>
</dbReference>
<dbReference type="Reactome" id="R-RNO-8939236">
    <property type="pathway name" value="RUNX1 regulates transcription of genes involved in differentiation of HSCs"/>
</dbReference>
<dbReference type="PRO" id="PR:P21677"/>
<dbReference type="Proteomes" id="UP000002494">
    <property type="component" value="Unplaced"/>
</dbReference>
<dbReference type="GO" id="GO:0000785">
    <property type="term" value="C:chromatin"/>
    <property type="evidence" value="ECO:0000266"/>
    <property type="project" value="RGD"/>
</dbReference>
<dbReference type="GO" id="GO:0005737">
    <property type="term" value="C:cytoplasm"/>
    <property type="evidence" value="ECO:0000250"/>
    <property type="project" value="UniProtKB"/>
</dbReference>
<dbReference type="GO" id="GO:0005829">
    <property type="term" value="C:cytosol"/>
    <property type="evidence" value="ECO:0000266"/>
    <property type="project" value="RGD"/>
</dbReference>
<dbReference type="GO" id="GO:0000791">
    <property type="term" value="C:euchromatin"/>
    <property type="evidence" value="ECO:0000266"/>
    <property type="project" value="RGD"/>
</dbReference>
<dbReference type="GO" id="GO:0000786">
    <property type="term" value="C:nucleosome"/>
    <property type="evidence" value="ECO:0000266"/>
    <property type="project" value="RGD"/>
</dbReference>
<dbReference type="GO" id="GO:0005634">
    <property type="term" value="C:nucleus"/>
    <property type="evidence" value="ECO:0000250"/>
    <property type="project" value="UniProtKB"/>
</dbReference>
<dbReference type="GO" id="GO:0032991">
    <property type="term" value="C:protein-containing complex"/>
    <property type="evidence" value="ECO:0000250"/>
    <property type="project" value="UniProtKB"/>
</dbReference>
<dbReference type="GO" id="GO:0090575">
    <property type="term" value="C:RNA polymerase II transcription regulator complex"/>
    <property type="evidence" value="ECO:0000266"/>
    <property type="project" value="RGD"/>
</dbReference>
<dbReference type="GO" id="GO:0005667">
    <property type="term" value="C:transcription regulator complex"/>
    <property type="evidence" value="ECO:0000314"/>
    <property type="project" value="UniProtKB"/>
</dbReference>
<dbReference type="GO" id="GO:0043425">
    <property type="term" value="F:bHLH transcription factor binding"/>
    <property type="evidence" value="ECO:0000353"/>
    <property type="project" value="UniProtKB"/>
</dbReference>
<dbReference type="GO" id="GO:0003682">
    <property type="term" value="F:chromatin binding"/>
    <property type="evidence" value="ECO:0000266"/>
    <property type="project" value="RGD"/>
</dbReference>
<dbReference type="GO" id="GO:0000987">
    <property type="term" value="F:cis-regulatory region sequence-specific DNA binding"/>
    <property type="evidence" value="ECO:0000266"/>
    <property type="project" value="RGD"/>
</dbReference>
<dbReference type="GO" id="GO:0003677">
    <property type="term" value="F:DNA binding"/>
    <property type="evidence" value="ECO:0000250"/>
    <property type="project" value="UniProtKB"/>
</dbReference>
<dbReference type="GO" id="GO:0001228">
    <property type="term" value="F:DNA-binding transcription activator activity, RNA polymerase II-specific"/>
    <property type="evidence" value="ECO:0000250"/>
    <property type="project" value="UniProtKB"/>
</dbReference>
<dbReference type="GO" id="GO:0003700">
    <property type="term" value="F:DNA-binding transcription factor activity"/>
    <property type="evidence" value="ECO:0000250"/>
    <property type="project" value="UniProtKB"/>
</dbReference>
<dbReference type="GO" id="GO:0000981">
    <property type="term" value="F:DNA-binding transcription factor activity, RNA polymerase II-specific"/>
    <property type="evidence" value="ECO:0000250"/>
    <property type="project" value="UniProtKB"/>
</dbReference>
<dbReference type="GO" id="GO:0140297">
    <property type="term" value="F:DNA-binding transcription factor binding"/>
    <property type="evidence" value="ECO:0000250"/>
    <property type="project" value="UniProtKB"/>
</dbReference>
<dbReference type="GO" id="GO:0001227">
    <property type="term" value="F:DNA-binding transcription repressor activity, RNA polymerase II-specific"/>
    <property type="evidence" value="ECO:0000266"/>
    <property type="project" value="RGD"/>
</dbReference>
<dbReference type="GO" id="GO:0070888">
    <property type="term" value="F:E-box binding"/>
    <property type="evidence" value="ECO:0000250"/>
    <property type="project" value="UniProtKB"/>
</dbReference>
<dbReference type="GO" id="GO:0042802">
    <property type="term" value="F:identical protein binding"/>
    <property type="evidence" value="ECO:0000266"/>
    <property type="project" value="RGD"/>
</dbReference>
<dbReference type="GO" id="GO:0031435">
    <property type="term" value="F:mitogen-activated protein kinase kinase kinase binding"/>
    <property type="evidence" value="ECO:0000266"/>
    <property type="project" value="RGD"/>
</dbReference>
<dbReference type="GO" id="GO:0030165">
    <property type="term" value="F:PDZ domain binding"/>
    <property type="evidence" value="ECO:0000353"/>
    <property type="project" value="RGD"/>
</dbReference>
<dbReference type="GO" id="GO:0046982">
    <property type="term" value="F:protein heterodimerization activity"/>
    <property type="evidence" value="ECO:0000250"/>
    <property type="project" value="UniProtKB"/>
</dbReference>
<dbReference type="GO" id="GO:0042803">
    <property type="term" value="F:protein homodimerization activity"/>
    <property type="evidence" value="ECO:0000250"/>
    <property type="project" value="UniProtKB"/>
</dbReference>
<dbReference type="GO" id="GO:0000978">
    <property type="term" value="F:RNA polymerase II cis-regulatory region sequence-specific DNA binding"/>
    <property type="evidence" value="ECO:0000266"/>
    <property type="project" value="RGD"/>
</dbReference>
<dbReference type="GO" id="GO:0061629">
    <property type="term" value="F:RNA polymerase II-specific DNA-binding transcription factor binding"/>
    <property type="evidence" value="ECO:0000266"/>
    <property type="project" value="RGD"/>
</dbReference>
<dbReference type="GO" id="GO:0043565">
    <property type="term" value="F:sequence-specific DNA binding"/>
    <property type="evidence" value="ECO:0000266"/>
    <property type="project" value="RGD"/>
</dbReference>
<dbReference type="GO" id="GO:0070644">
    <property type="term" value="F:vitamin D response element binding"/>
    <property type="evidence" value="ECO:0000266"/>
    <property type="project" value="RGD"/>
</dbReference>
<dbReference type="GO" id="GO:0002326">
    <property type="term" value="P:B cell lineage commitment"/>
    <property type="evidence" value="ECO:0000250"/>
    <property type="project" value="UniProtKB"/>
</dbReference>
<dbReference type="GO" id="GO:0048468">
    <property type="term" value="P:cell development"/>
    <property type="evidence" value="ECO:0000266"/>
    <property type="project" value="RGD"/>
</dbReference>
<dbReference type="GO" id="GO:0006338">
    <property type="term" value="P:chromatin remodeling"/>
    <property type="evidence" value="ECO:0000266"/>
    <property type="project" value="RGD"/>
</dbReference>
<dbReference type="GO" id="GO:0007369">
    <property type="term" value="P:gastrulation"/>
    <property type="evidence" value="ECO:0000266"/>
    <property type="project" value="RGD"/>
</dbReference>
<dbReference type="GO" id="GO:0010467">
    <property type="term" value="P:gene expression"/>
    <property type="evidence" value="ECO:0000266"/>
    <property type="project" value="RGD"/>
</dbReference>
<dbReference type="GO" id="GO:0033152">
    <property type="term" value="P:immunoglobulin V(D)J recombination"/>
    <property type="evidence" value="ECO:0000266"/>
    <property type="project" value="RGD"/>
</dbReference>
<dbReference type="GO" id="GO:0030098">
    <property type="term" value="P:lymphocyte differentiation"/>
    <property type="evidence" value="ECO:0000266"/>
    <property type="project" value="RGD"/>
</dbReference>
<dbReference type="GO" id="GO:0001779">
    <property type="term" value="P:natural killer cell differentiation"/>
    <property type="evidence" value="ECO:0000266"/>
    <property type="project" value="RGD"/>
</dbReference>
<dbReference type="GO" id="GO:0000122">
    <property type="term" value="P:negative regulation of transcription by RNA polymerase II"/>
    <property type="evidence" value="ECO:0000266"/>
    <property type="project" value="RGD"/>
</dbReference>
<dbReference type="GO" id="GO:0048541">
    <property type="term" value="P:Peyer's patch development"/>
    <property type="evidence" value="ECO:0000266"/>
    <property type="project" value="RGD"/>
</dbReference>
<dbReference type="GO" id="GO:0030890">
    <property type="term" value="P:positive regulation of B cell proliferation"/>
    <property type="evidence" value="ECO:0000250"/>
    <property type="project" value="UniProtKB"/>
</dbReference>
<dbReference type="GO" id="GO:0045787">
    <property type="term" value="P:positive regulation of cell cycle"/>
    <property type="evidence" value="ECO:0000250"/>
    <property type="project" value="UniProtKB"/>
</dbReference>
<dbReference type="GO" id="GO:0051091">
    <property type="term" value="P:positive regulation of DNA-binding transcription factor activity"/>
    <property type="evidence" value="ECO:0000250"/>
    <property type="project" value="UniProtKB"/>
</dbReference>
<dbReference type="GO" id="GO:0045893">
    <property type="term" value="P:positive regulation of DNA-templated transcription"/>
    <property type="evidence" value="ECO:0000314"/>
    <property type="project" value="UniProtKB"/>
</dbReference>
<dbReference type="GO" id="GO:0010628">
    <property type="term" value="P:positive regulation of gene expression"/>
    <property type="evidence" value="ECO:0000314"/>
    <property type="project" value="UniProtKB"/>
</dbReference>
<dbReference type="GO" id="GO:0045666">
    <property type="term" value="P:positive regulation of neuron differentiation"/>
    <property type="evidence" value="ECO:0000250"/>
    <property type="project" value="UniProtKB"/>
</dbReference>
<dbReference type="GO" id="GO:0045944">
    <property type="term" value="P:positive regulation of transcription by RNA polymerase II"/>
    <property type="evidence" value="ECO:0000250"/>
    <property type="project" value="UniProtKB"/>
</dbReference>
<dbReference type="GO" id="GO:0050821">
    <property type="term" value="P:protein stabilization"/>
    <property type="evidence" value="ECO:0000266"/>
    <property type="project" value="RGD"/>
</dbReference>
<dbReference type="GO" id="GO:0006355">
    <property type="term" value="P:regulation of DNA-templated transcription"/>
    <property type="evidence" value="ECO:0000266"/>
    <property type="project" value="RGD"/>
</dbReference>
<dbReference type="GO" id="GO:2000045">
    <property type="term" value="P:regulation of G1/S transition of mitotic cell cycle"/>
    <property type="evidence" value="ECO:0000250"/>
    <property type="project" value="UniProtKB"/>
</dbReference>
<dbReference type="GO" id="GO:0006357">
    <property type="term" value="P:regulation of transcription by RNA polymerase II"/>
    <property type="evidence" value="ECO:0000266"/>
    <property type="project" value="RGD"/>
</dbReference>
<dbReference type="GO" id="GO:0032496">
    <property type="term" value="P:response to lipopolysaccharide"/>
    <property type="evidence" value="ECO:0000266"/>
    <property type="project" value="RGD"/>
</dbReference>
<dbReference type="GO" id="GO:0009410">
    <property type="term" value="P:response to xenobiotic stimulus"/>
    <property type="evidence" value="ECO:0000266"/>
    <property type="project" value="RGD"/>
</dbReference>
<dbReference type="GO" id="GO:0033077">
    <property type="term" value="P:T cell differentiation in thymus"/>
    <property type="evidence" value="ECO:0000266"/>
    <property type="project" value="RGD"/>
</dbReference>
<dbReference type="GO" id="GO:0006366">
    <property type="term" value="P:transcription by RNA polymerase II"/>
    <property type="evidence" value="ECO:0000266"/>
    <property type="project" value="RGD"/>
</dbReference>
<dbReference type="CDD" id="cd18945">
    <property type="entry name" value="bHLH_E-protein_TCF4_E2-2"/>
    <property type="match status" value="1"/>
</dbReference>
<dbReference type="FunFam" id="4.10.280.10:FF:000001">
    <property type="entry name" value="Putative transcription factor 12"/>
    <property type="match status" value="1"/>
</dbReference>
<dbReference type="Gene3D" id="4.10.280.10">
    <property type="entry name" value="Helix-loop-helix DNA-binding domain"/>
    <property type="match status" value="1"/>
</dbReference>
<dbReference type="InterPro" id="IPR011598">
    <property type="entry name" value="bHLH_dom"/>
</dbReference>
<dbReference type="InterPro" id="IPR036638">
    <property type="entry name" value="HLH_DNA-bd_sf"/>
</dbReference>
<dbReference type="InterPro" id="IPR051098">
    <property type="entry name" value="NeuroDiff_E-box_TFs"/>
</dbReference>
<dbReference type="PANTHER" id="PTHR11793">
    <property type="entry name" value="BASIC HELIX-LOOP-HELIX TRANSCRIPTION FACTOR"/>
    <property type="match status" value="1"/>
</dbReference>
<dbReference type="PANTHER" id="PTHR11793:SF7">
    <property type="entry name" value="TRANSCRIPTION FACTOR E2-ALPHA"/>
    <property type="match status" value="1"/>
</dbReference>
<dbReference type="Pfam" id="PF00010">
    <property type="entry name" value="HLH"/>
    <property type="match status" value="1"/>
</dbReference>
<dbReference type="SMART" id="SM00353">
    <property type="entry name" value="HLH"/>
    <property type="match status" value="1"/>
</dbReference>
<dbReference type="SUPFAM" id="SSF47459">
    <property type="entry name" value="HLH, helix-loop-helix DNA-binding domain"/>
    <property type="match status" value="1"/>
</dbReference>
<dbReference type="PROSITE" id="PS50888">
    <property type="entry name" value="BHLH"/>
    <property type="match status" value="1"/>
</dbReference>
<sequence>MMNQSQRMAPVGSDKELSDLLDFSMMFPLPVANGKGRPASLAGTQFAGSGLEDRPSSESWGNSEQNSSSFDPSRAYSEGAHFSDSHSSLPPSTFLGAGLGGKGSERNAYATFGRDTSVGTLSQAGFLPGELGLSSPGPLSPSGVKSSSQYYTSFPSNPRRRAADGGLDTQPKKVRKVPPGLPSSVYPSSSGDNYSRDATAYPSAKTPSSAYPSPFYVADGSLHPSAELWSPPGQVGFGPMLGDGSAPLPLAPGSSSVSSGAFGGLQQQDRMGYQLHGSEVNGTLPAVSSFSAAPGTYSGTSGHTPPVSGADSLLGTRGTTASSSGDALGKALASIYSPDHSSNNFSPSPSTPVGSPQGLPGTSQWPRAGAPSALSPNYDAGLHGLSKMEDRLDEAIHVLRSHAVGTASELHGLLPGHSTLTTSFAGPMSLGGRHAGLVSGSHPEDGLTSGASLLHNHASLPSQPSSLPDLSQRPPDSFSGLGRAGVTAGASEIKREEKEDEEVTSVADAEEDKKDLKVPRTRTSPDEDEDDLLPPEQKAEREKERRVANNARERLRVRDINEAFKELGRMCQLHLSTEKPQTKLLILHQAVAVILSLEQQVRERNLNPKAACLKRREEEKVSGVVGDPQLALSAAHPGLGEAHNPAGHL</sequence>
<keyword id="KW-0025">Alternative splicing</keyword>
<keyword id="KW-0238">DNA-binding</keyword>
<keyword id="KW-1017">Isopeptide bond</keyword>
<keyword id="KW-0488">Methylation</keyword>
<keyword id="KW-0539">Nucleus</keyword>
<keyword id="KW-0597">Phosphoprotein</keyword>
<keyword id="KW-1185">Reference proteome</keyword>
<keyword id="KW-0804">Transcription</keyword>
<keyword id="KW-0805">Transcription regulation</keyword>
<keyword id="KW-0832">Ubl conjugation</keyword>
<name>TFE2_RAT</name>
<protein>
    <recommendedName>
        <fullName>Transcription factor E2-alpha</fullName>
    </recommendedName>
    <alternativeName>
        <fullName>Immunoglobulin enhancer-binding factor E12/E47</fullName>
    </alternativeName>
    <alternativeName>
        <fullName>Pancreas specific transcription factor 1c</fullName>
    </alternativeName>
    <alternativeName>
        <fullName>Transcription factor 3</fullName>
        <shortName>TCF-3</shortName>
    </alternativeName>
    <alternativeName>
        <fullName>Transcription regulator Pan</fullName>
    </alternativeName>
</protein>
<accession>P21677</accession>
<accession>P21676</accession>
<accession>Q08440</accession>
<accession>Q4VY47</accession>
<feature type="chain" id="PRO_0000127469" description="Transcription factor E2-alpha">
    <location>
        <begin position="1"/>
        <end position="649"/>
    </location>
</feature>
<feature type="domain" description="bHLH" evidence="5">
    <location>
        <begin position="544"/>
        <end position="597"/>
    </location>
</feature>
<feature type="region of interest" description="Disordered" evidence="6">
    <location>
        <begin position="37"/>
        <end position="107"/>
    </location>
</feature>
<feature type="region of interest" description="Disordered" evidence="6">
    <location>
        <begin position="132"/>
        <end position="207"/>
    </location>
</feature>
<feature type="region of interest" description="Disordered" evidence="6">
    <location>
        <begin position="296"/>
        <end position="325"/>
    </location>
</feature>
<feature type="region of interest" description="Disordered" evidence="6">
    <location>
        <begin position="339"/>
        <end position="376"/>
    </location>
</feature>
<feature type="region of interest" description="Leucine-zipper">
    <location>
        <begin position="385"/>
        <end position="420"/>
    </location>
</feature>
<feature type="region of interest" description="Disordered" evidence="6">
    <location>
        <begin position="435"/>
        <end position="547"/>
    </location>
</feature>
<feature type="short sequence motif" description="Nuclear localization signal" evidence="4">
    <location>
        <begin position="171"/>
        <end position="177"/>
    </location>
</feature>
<feature type="compositionally biased region" description="Polar residues" evidence="6">
    <location>
        <begin position="57"/>
        <end position="71"/>
    </location>
</feature>
<feature type="compositionally biased region" description="Low complexity" evidence="6">
    <location>
        <begin position="132"/>
        <end position="148"/>
    </location>
</feature>
<feature type="compositionally biased region" description="Low complexity" evidence="6">
    <location>
        <begin position="339"/>
        <end position="352"/>
    </location>
</feature>
<feature type="compositionally biased region" description="Low complexity" evidence="6">
    <location>
        <begin position="459"/>
        <end position="477"/>
    </location>
</feature>
<feature type="compositionally biased region" description="Basic and acidic residues" evidence="6">
    <location>
        <begin position="537"/>
        <end position="547"/>
    </location>
</feature>
<feature type="modified residue" description="Phosphoserine" evidence="3">
    <location>
        <position position="135"/>
    </location>
</feature>
<feature type="modified residue" description="Phosphoserine" evidence="3">
    <location>
        <position position="140"/>
    </location>
</feature>
<feature type="modified residue" description="Phosphothreonine" evidence="2">
    <location>
        <position position="351"/>
    </location>
</feature>
<feature type="modified residue" description="Phosphoserine" evidence="3">
    <location>
        <position position="355"/>
    </location>
</feature>
<feature type="modified residue" description="Omega-N-methylarginine" evidence="2">
    <location>
        <position position="367"/>
    </location>
</feature>
<feature type="modified residue" description="Phosphoserine" evidence="3">
    <location>
        <position position="375"/>
    </location>
</feature>
<feature type="modified residue" description="Phosphoserine" evidence="3">
    <location>
        <position position="524"/>
    </location>
</feature>
<feature type="cross-link" description="Glycyl lysine isopeptide (Lys-Gly) (interchain with G-Cter in SUMO2)" evidence="3">
    <location>
        <position position="494"/>
    </location>
</feature>
<feature type="cross-link" description="Glycyl lysine isopeptide (Lys-Gly) (interchain with G-Cter in SUMO2)" evidence="3">
    <location>
        <position position="620"/>
    </location>
</feature>
<feature type="splice variant" id="VSP_002157" description="In isoform E47." evidence="9">
    <original>PDEDEDDLLPPEQKAEREKERRVANNARERLRVRDINEAFKELGRMCQLHLSTEKPQTKLLILHQAVAVILS</original>
    <variation>STDEVLSLEEKDLRDRERRMANNARERVRVRDINEAFRELGRMCQLHLKSDKAQTKLLILQQAVQVILG</variation>
    <location>
        <begin position="525"/>
        <end position="596"/>
    </location>
</feature>
<feature type="sequence conflict" description="In Ref. 1; CAA44199." evidence="10" ref="1">
    <original>L</original>
    <variation>LA</variation>
    <location>
        <position position="167"/>
    </location>
</feature>
<feature type="sequence conflict" description="In Ref. 3; AAB21103." evidence="10" ref="3">
    <original>P</original>
    <variation>A</variation>
    <location>
        <position position="427"/>
    </location>
</feature>
<feature type="sequence conflict" description="In Ref. 3; AAB21103." evidence="10" ref="3">
    <original>D</original>
    <variation>DH</variation>
    <location>
        <position position="508"/>
    </location>
</feature>
<feature type="sequence conflict" description="In Ref. 3; AAB21103." evidence="10" ref="3">
    <original>ST</original>
    <variation>NS</variation>
    <location>
        <begin position="576"/>
        <end position="577"/>
    </location>
</feature>
<feature type="sequence conflict" description="In Ref. 3; AAB21103." evidence="10" ref="3">
    <original>P</original>
    <variation>T</variation>
    <location>
        <position position="637"/>
    </location>
</feature>
<feature type="modified residue" description="Phosphothreonine" evidence="1">
    <location sequence="P21677-2">
        <position position="526"/>
    </location>
</feature>
<proteinExistence type="evidence at protein level"/>
<reference key="1">
    <citation type="journal article" date="1990" name="Genes Dev.">
        <title>Pan: a transcriptional regulator that binds chymotrypsin, insulin, and AP-4 enhancer motifs.</title>
        <authorList>
            <person name="Nelson C."/>
            <person name="Shen L.-P."/>
            <person name="Meister A."/>
            <person name="Fodor E."/>
            <person name="Rutter W.J."/>
        </authorList>
    </citation>
    <scope>NUCLEOTIDE SEQUENCE [MRNA] (ISOFORMS E12 AND E47)</scope>
    <scope>FUNCTION</scope>
</reference>
<reference key="2">
    <citation type="submission" date="2005-05" db="EMBL/GenBank/DDBJ databases">
        <authorList>
            <person name="Wellauer P.K."/>
        </authorList>
    </citation>
    <scope>NUCLEOTIDE SEQUENCE [MRNA] (ISOFORM E12)</scope>
    <source>
        <strain>Sprague-Dawley</strain>
    </source>
</reference>
<reference key="3">
    <citation type="journal article" date="1991" name="Oncogene">
        <title>The helix-loop-helix protein rE12 and the C/EBP-related factor rNFIL-6 bind to neighboring sites within the c-fos serum response element.</title>
        <authorList>
            <person name="Metz R."/>
            <person name="Ziff E."/>
        </authorList>
    </citation>
    <scope>NUCLEOTIDE SEQUENCE [MRNA] OF 427-649 (ISOFORM E12)</scope>
</reference>
<reference key="4">
    <citation type="journal article" date="1997" name="J. Biol. Chem.">
        <title>Degradation of E2A proteins through a ubiquitin-conjugating enzyme, UbcE2A.</title>
        <authorList>
            <person name="Kho C.-J."/>
            <person name="Huggins G.S."/>
            <person name="Endege W.O."/>
            <person name="Hsieh C.-M."/>
            <person name="Lee M.-E."/>
            <person name="Haber E."/>
        </authorList>
    </citation>
    <scope>INTERACTION WITH UBE2I</scope>
    <source>
        <strain>CD Charles River</strain>
        <tissue>Aorta</tissue>
    </source>
</reference>
<reference key="5">
    <citation type="journal article" date="2012" name="Nat. Commun.">
        <title>Quantitative maps of protein phosphorylation sites across 14 different rat organs and tissues.</title>
        <authorList>
            <person name="Lundby A."/>
            <person name="Secher A."/>
            <person name="Lage K."/>
            <person name="Nordsborg N.B."/>
            <person name="Dmytriyev A."/>
            <person name="Lundby C."/>
            <person name="Olsen J.V."/>
        </authorList>
    </citation>
    <scope>IDENTIFICATION BY MASS SPECTROMETRY [LARGE SCALE ANALYSIS]</scope>
</reference>
<evidence type="ECO:0000250" key="1"/>
<evidence type="ECO:0000250" key="2">
    <source>
        <dbReference type="UniProtKB" id="P15806"/>
    </source>
</evidence>
<evidence type="ECO:0000250" key="3">
    <source>
        <dbReference type="UniProtKB" id="P15923"/>
    </source>
</evidence>
<evidence type="ECO:0000255" key="4"/>
<evidence type="ECO:0000255" key="5">
    <source>
        <dbReference type="PROSITE-ProRule" id="PRU00981"/>
    </source>
</evidence>
<evidence type="ECO:0000256" key="6">
    <source>
        <dbReference type="SAM" id="MobiDB-lite"/>
    </source>
</evidence>
<evidence type="ECO:0000269" key="7">
    <source>
    </source>
</evidence>
<evidence type="ECO:0000269" key="8">
    <source>
    </source>
</evidence>
<evidence type="ECO:0000303" key="9">
    <source>
    </source>
</evidence>
<evidence type="ECO:0000305" key="10"/>